<comment type="subcellular location">
    <subcellularLocation>
        <location>Mitochondrion</location>
    </subcellularLocation>
    <subcellularLocation>
        <location evidence="1">Membrane</location>
        <topology evidence="1">Single-pass membrane protein</topology>
    </subcellularLocation>
</comment>
<comment type="similarity">
    <text evidence="4">Belongs to the LCL3 family.</text>
</comment>
<evidence type="ECO:0000250" key="1"/>
<evidence type="ECO:0000255" key="2"/>
<evidence type="ECO:0000255" key="3">
    <source>
        <dbReference type="PROSITE-ProRule" id="PRU00272"/>
    </source>
</evidence>
<evidence type="ECO:0000305" key="4"/>
<gene>
    <name type="primary">LCL3</name>
    <name type="ordered locus">CAALFM_C113770CA</name>
    <name type="ORF">CaO19.12481</name>
    <name type="ORF">CaO19.5014</name>
</gene>
<protein>
    <recommendedName>
        <fullName>Probable endonuclease LCL3</fullName>
        <ecNumber>3.1.-.-</ecNumber>
    </recommendedName>
</protein>
<organism>
    <name type="scientific">Candida albicans (strain SC5314 / ATCC MYA-2876)</name>
    <name type="common">Yeast</name>
    <dbReference type="NCBI Taxonomy" id="237561"/>
    <lineage>
        <taxon>Eukaryota</taxon>
        <taxon>Fungi</taxon>
        <taxon>Dikarya</taxon>
        <taxon>Ascomycota</taxon>
        <taxon>Saccharomycotina</taxon>
        <taxon>Pichiomycetes</taxon>
        <taxon>Debaryomycetaceae</taxon>
        <taxon>Candida/Lodderomyces clade</taxon>
        <taxon>Candida</taxon>
    </lineage>
</organism>
<keyword id="KW-0106">Calcium</keyword>
<keyword id="KW-0255">Endonuclease</keyword>
<keyword id="KW-0378">Hydrolase</keyword>
<keyword id="KW-0472">Membrane</keyword>
<keyword id="KW-0479">Metal-binding</keyword>
<keyword id="KW-0496">Mitochondrion</keyword>
<keyword id="KW-0540">Nuclease</keyword>
<keyword id="KW-1185">Reference proteome</keyword>
<keyword id="KW-0812">Transmembrane</keyword>
<keyword id="KW-1133">Transmembrane helix</keyword>
<dbReference type="EC" id="3.1.-.-"/>
<dbReference type="EMBL" id="CP017623">
    <property type="protein sequence ID" value="AOW26979.1"/>
    <property type="molecule type" value="Genomic_DNA"/>
</dbReference>
<dbReference type="RefSeq" id="XP_722218.1">
    <property type="nucleotide sequence ID" value="XM_717125.1"/>
</dbReference>
<dbReference type="SMR" id="Q5AKW3"/>
<dbReference type="FunCoup" id="Q5AKW3">
    <property type="interactions" value="20"/>
</dbReference>
<dbReference type="STRING" id="237561.Q5AKW3"/>
<dbReference type="EnsemblFungi" id="C1_13770C_A-T">
    <property type="protein sequence ID" value="C1_13770C_A-T-p1"/>
    <property type="gene ID" value="C1_13770C_A"/>
</dbReference>
<dbReference type="GeneID" id="3636139"/>
<dbReference type="KEGG" id="cal:CAALFM_C113770CA"/>
<dbReference type="CGD" id="CAL0000194570">
    <property type="gene designation" value="orf19.12481"/>
</dbReference>
<dbReference type="VEuPathDB" id="FungiDB:C1_13770C_A"/>
<dbReference type="eggNOG" id="ENOG502S1U4">
    <property type="taxonomic scope" value="Eukaryota"/>
</dbReference>
<dbReference type="HOGENOM" id="CLU_046484_0_1_1"/>
<dbReference type="InParanoid" id="Q5AKW3"/>
<dbReference type="OMA" id="IYHTPGG"/>
<dbReference type="OrthoDB" id="430293at2759"/>
<dbReference type="PRO" id="PR:Q5AKW3"/>
<dbReference type="Proteomes" id="UP000000559">
    <property type="component" value="Chromosome 1"/>
</dbReference>
<dbReference type="GO" id="GO:0016020">
    <property type="term" value="C:membrane"/>
    <property type="evidence" value="ECO:0007669"/>
    <property type="project" value="UniProtKB-SubCell"/>
</dbReference>
<dbReference type="GO" id="GO:0005739">
    <property type="term" value="C:mitochondrion"/>
    <property type="evidence" value="ECO:0007669"/>
    <property type="project" value="UniProtKB-SubCell"/>
</dbReference>
<dbReference type="GO" id="GO:0004519">
    <property type="term" value="F:endonuclease activity"/>
    <property type="evidence" value="ECO:0007669"/>
    <property type="project" value="UniProtKB-KW"/>
</dbReference>
<dbReference type="GO" id="GO:0046872">
    <property type="term" value="F:metal ion binding"/>
    <property type="evidence" value="ECO:0007669"/>
    <property type="project" value="UniProtKB-KW"/>
</dbReference>
<dbReference type="FunFam" id="2.40.50.90:FF:000035">
    <property type="entry name" value="Probable endonuclease LCL3"/>
    <property type="match status" value="1"/>
</dbReference>
<dbReference type="Gene3D" id="2.40.50.90">
    <property type="match status" value="1"/>
</dbReference>
<dbReference type="InterPro" id="IPR035437">
    <property type="entry name" value="SNase_OB-fold_sf"/>
</dbReference>
<dbReference type="InterPro" id="IPR016071">
    <property type="entry name" value="Staphylococal_nuclease_OB-fold"/>
</dbReference>
<dbReference type="PANTHER" id="PTHR12302">
    <property type="entry name" value="EBNA2 BINDING PROTEIN P100"/>
    <property type="match status" value="1"/>
</dbReference>
<dbReference type="PANTHER" id="PTHR12302:SF3">
    <property type="entry name" value="SERINE_THREONINE-PROTEIN KINASE 31"/>
    <property type="match status" value="1"/>
</dbReference>
<dbReference type="Pfam" id="PF00565">
    <property type="entry name" value="SNase"/>
    <property type="match status" value="1"/>
</dbReference>
<dbReference type="SMART" id="SM00318">
    <property type="entry name" value="SNc"/>
    <property type="match status" value="1"/>
</dbReference>
<dbReference type="SUPFAM" id="SSF50199">
    <property type="entry name" value="Staphylococcal nuclease"/>
    <property type="match status" value="1"/>
</dbReference>
<dbReference type="PROSITE" id="PS50830">
    <property type="entry name" value="TNASE_3"/>
    <property type="match status" value="1"/>
</dbReference>
<proteinExistence type="inferred from homology"/>
<sequence length="235" mass="27374">MPPIPAEPTENISIFHPKVLLLSAGVTTSLFFGYKFYKRYIKRIRTYLDLTPSIIENNTKLYGYVTRVGDGDNFRFYHTPGGWFFGWGWLRKIPTTRKDLKDETLMIRLCGVDAPEGAHFGKPAQPYSKEALYWLREYVDGKYVTITPYSIDQYKRVVARAQIWKWTGRKDVSAEMLKVGYAIVYEGKAEAEFGDNEDWYRKLESRAKLLRKGVWSLGKNLTTPGEFKRIHYRGE</sequence>
<name>LCL3_CANAL</name>
<feature type="chain" id="PRO_0000408650" description="Probable endonuclease LCL3">
    <location>
        <begin position="1"/>
        <end position="235"/>
    </location>
</feature>
<feature type="transmembrane region" description="Helical" evidence="2">
    <location>
        <begin position="15"/>
        <end position="37"/>
    </location>
</feature>
<feature type="domain" description="TNase-like" evidence="3">
    <location>
        <begin position="59"/>
        <end position="217"/>
    </location>
</feature>
<feature type="active site" evidence="3">
    <location>
        <position position="108"/>
    </location>
</feature>
<feature type="active site" evidence="3">
    <location>
        <position position="116"/>
    </location>
</feature>
<feature type="active site" evidence="3">
    <location>
        <position position="156"/>
    </location>
</feature>
<feature type="binding site" evidence="3">
    <location>
        <position position="113"/>
    </location>
    <ligand>
        <name>Ca(2+)</name>
        <dbReference type="ChEBI" id="CHEBI:29108"/>
    </ligand>
</feature>
<accession>Q5AKW3</accession>
<accession>A0A1D8PFS1</accession>
<reference key="1">
    <citation type="journal article" date="2004" name="Proc. Natl. Acad. Sci. U.S.A.">
        <title>The diploid genome sequence of Candida albicans.</title>
        <authorList>
            <person name="Jones T."/>
            <person name="Federspiel N.A."/>
            <person name="Chibana H."/>
            <person name="Dungan J."/>
            <person name="Kalman S."/>
            <person name="Magee B.B."/>
            <person name="Newport G."/>
            <person name="Thorstenson Y.R."/>
            <person name="Agabian N."/>
            <person name="Magee P.T."/>
            <person name="Davis R.W."/>
            <person name="Scherer S."/>
        </authorList>
    </citation>
    <scope>NUCLEOTIDE SEQUENCE [LARGE SCALE GENOMIC DNA]</scope>
    <source>
        <strain>SC5314 / ATCC MYA-2876</strain>
    </source>
</reference>
<reference key="2">
    <citation type="journal article" date="2007" name="Genome Biol.">
        <title>Assembly of the Candida albicans genome into sixteen supercontigs aligned on the eight chromosomes.</title>
        <authorList>
            <person name="van het Hoog M."/>
            <person name="Rast T.J."/>
            <person name="Martchenko M."/>
            <person name="Grindle S."/>
            <person name="Dignard D."/>
            <person name="Hogues H."/>
            <person name="Cuomo C."/>
            <person name="Berriman M."/>
            <person name="Scherer S."/>
            <person name="Magee B.B."/>
            <person name="Whiteway M."/>
            <person name="Chibana H."/>
            <person name="Nantel A."/>
            <person name="Magee P.T."/>
        </authorList>
    </citation>
    <scope>GENOME REANNOTATION</scope>
    <source>
        <strain>SC5314 / ATCC MYA-2876</strain>
    </source>
</reference>
<reference key="3">
    <citation type="journal article" date="2013" name="Genome Biol.">
        <title>Assembly of a phased diploid Candida albicans genome facilitates allele-specific measurements and provides a simple model for repeat and indel structure.</title>
        <authorList>
            <person name="Muzzey D."/>
            <person name="Schwartz K."/>
            <person name="Weissman J.S."/>
            <person name="Sherlock G."/>
        </authorList>
    </citation>
    <scope>NUCLEOTIDE SEQUENCE [LARGE SCALE GENOMIC DNA]</scope>
    <scope>GENOME REANNOTATION</scope>
    <source>
        <strain>SC5314 / ATCC MYA-2876</strain>
    </source>
</reference>